<organism>
    <name type="scientific">Bacillus amyloliquefaciens</name>
    <name type="common">Bacillus velezensis</name>
    <dbReference type="NCBI Taxonomy" id="1390"/>
    <lineage>
        <taxon>Bacteria</taxon>
        <taxon>Bacillati</taxon>
        <taxon>Bacillota</taxon>
        <taxon>Bacilli</taxon>
        <taxon>Bacillales</taxon>
        <taxon>Bacillaceae</taxon>
        <taxon>Bacillus</taxon>
        <taxon>Bacillus amyloliquefaciens group</taxon>
    </lineage>
</organism>
<proteinExistence type="inferred from homology"/>
<protein>
    <recommendedName>
        <fullName evidence="1">H2HPP isomerase</fullName>
        <ecNumber evidence="1">5.3.3.19</ecNumber>
    </recommendedName>
    <alternativeName>
        <fullName evidence="1">3-((4R)-4-hydroxycyclohexa-1,5-dien-1-yl)-2-oxopropanoate isomerase</fullName>
    </alternativeName>
    <alternativeName>
        <fullName evidence="1">Bacilysin biosynthesis protein BacB</fullName>
    </alternativeName>
    <alternativeName>
        <fullName evidence="1">Bi-cupin protein</fullName>
    </alternativeName>
</protein>
<keyword id="KW-0045">Antibiotic biosynthesis</keyword>
<keyword id="KW-0170">Cobalt</keyword>
<keyword id="KW-0963">Cytoplasm</keyword>
<keyword id="KW-0408">Iron</keyword>
<keyword id="KW-0413">Isomerase</keyword>
<keyword id="KW-0479">Metal-binding</keyword>
<comment type="function">
    <text evidence="1">Part of the bacABCDEF operon responsible for the biosynthesis of the nonribosomally synthesized dipeptide antibiotic bacilysin, composed of L-alanine and L-anticapsin. Bacilysin is an irreversible inactivator of the glutaminase domain of glucosamine synthetase. BacB catalyzes the allylic isomerization of the endocyclic-delta(4),delta(8)-7R-dihydro-hydroxyphenylpyruvate (en-H2HPP) to generate a mixture of 3E,7R- and 3Z, 7R-olefins of the exocyclic-delta(3),delta(5)-dihydro-hydroxyphenylpyruvate (ex-H2HPP).</text>
</comment>
<comment type="catalytic activity">
    <reaction evidence="1">
        <text>3-[(4R)-4-hydroxycyclohexa-1,5-dien-1-yl]-2-oxopropanoate = 3-[(1E,4R)-4-hydroxycyclohex-2-en-1-ylidene]pyruvate</text>
        <dbReference type="Rhea" id="RHEA:33819"/>
        <dbReference type="ChEBI" id="CHEBI:84354"/>
        <dbReference type="ChEBI" id="CHEBI:84355"/>
        <dbReference type="EC" id="5.3.3.19"/>
    </reaction>
</comment>
<comment type="cofactor">
    <cofactor evidence="1">
        <name>Fe(2+)</name>
        <dbReference type="ChEBI" id="CHEBI:29033"/>
    </cofactor>
    <cofactor evidence="1">
        <name>Co(2+)</name>
        <dbReference type="ChEBI" id="CHEBI:48828"/>
    </cofactor>
    <text evidence="1">Binds 2 Fe(2+) or Co(2+) ions per subunit.</text>
</comment>
<comment type="pathway">
    <text evidence="1">Antibiotic biosynthesis; bacilysin biosynthesis.</text>
</comment>
<comment type="subunit">
    <text evidence="1">Monomer.</text>
</comment>
<comment type="subcellular location">
    <subcellularLocation>
        <location evidence="3">Cytoplasm</location>
    </subcellularLocation>
</comment>
<feature type="chain" id="PRO_0000064800" description="H2HPP isomerase">
    <location>
        <begin position="1"/>
        <end position="236"/>
    </location>
</feature>
<feature type="domain" description="Cupin type-2 1" evidence="2">
    <location>
        <begin position="40"/>
        <end position="106"/>
    </location>
</feature>
<feature type="domain" description="Cupin type-2 2" evidence="2">
    <location>
        <begin position="151"/>
        <end position="215"/>
    </location>
</feature>
<feature type="binding site" evidence="1">
    <location>
        <position position="50"/>
    </location>
    <ligand>
        <name>a divalent metal cation</name>
        <dbReference type="ChEBI" id="CHEBI:60240"/>
        <label>1</label>
    </ligand>
</feature>
<feature type="binding site" evidence="1">
    <location>
        <position position="52"/>
    </location>
    <ligand>
        <name>a divalent metal cation</name>
        <dbReference type="ChEBI" id="CHEBI:60240"/>
        <label>1</label>
    </ligand>
</feature>
<feature type="binding site" evidence="1">
    <location>
        <position position="56"/>
    </location>
    <ligand>
        <name>a divalent metal cation</name>
        <dbReference type="ChEBI" id="CHEBI:60240"/>
        <label>1</label>
    </ligand>
</feature>
<feature type="binding site" evidence="1">
    <location>
        <position position="91"/>
    </location>
    <ligand>
        <name>a divalent metal cation</name>
        <dbReference type="ChEBI" id="CHEBI:60240"/>
        <label>1</label>
    </ligand>
</feature>
<feature type="binding site" evidence="1">
    <location>
        <position position="162"/>
    </location>
    <ligand>
        <name>a divalent metal cation</name>
        <dbReference type="ChEBI" id="CHEBI:60240"/>
        <label>2</label>
    </ligand>
</feature>
<feature type="binding site" evidence="1">
    <location>
        <position position="164"/>
    </location>
    <ligand>
        <name>a divalent metal cation</name>
        <dbReference type="ChEBI" id="CHEBI:60240"/>
        <label>2</label>
    </ligand>
</feature>
<feature type="binding site" evidence="1">
    <location>
        <position position="168"/>
    </location>
    <ligand>
        <name>a divalent metal cation</name>
        <dbReference type="ChEBI" id="CHEBI:60240"/>
        <label>2</label>
    </ligand>
</feature>
<feature type="binding site" evidence="1">
    <location>
        <position position="202"/>
    </location>
    <ligand>
        <name>a divalent metal cation</name>
        <dbReference type="ChEBI" id="CHEBI:60240"/>
        <label>2</label>
    </ligand>
</feature>
<feature type="binding site" evidence="1">
    <location>
        <position position="223"/>
    </location>
    <ligand>
        <name>substrate</name>
    </ligand>
</feature>
<reference key="1">
    <citation type="journal article" date="2005" name="Arch. Microbiol.">
        <title>bac genes for recombinant bacilysin and anticapsin production in Bacillus host strains.</title>
        <authorList>
            <person name="Steinborn G."/>
            <person name="Hajirezaei M.-R."/>
            <person name="Hofemeister J."/>
        </authorList>
    </citation>
    <scope>NUCLEOTIDE SEQUENCE [GENOMIC DNA]</scope>
    <source>
        <strain>ATCC 15841</strain>
    </source>
</reference>
<dbReference type="EC" id="5.3.3.19" evidence="1"/>
<dbReference type="EMBL" id="AF396779">
    <property type="protein sequence ID" value="AAM90574.1"/>
    <property type="molecule type" value="Genomic_DNA"/>
</dbReference>
<dbReference type="RefSeq" id="WP_014471185.1">
    <property type="nucleotide sequence ID" value="NZ_CP041693.1"/>
</dbReference>
<dbReference type="SMR" id="Q8KWT0"/>
<dbReference type="STRING" id="692420.BAMF_3606"/>
<dbReference type="PATRIC" id="fig|1390.176.peg.1784"/>
<dbReference type="eggNOG" id="COG1917">
    <property type="taxonomic scope" value="Bacteria"/>
</dbReference>
<dbReference type="OrthoDB" id="4105826at2"/>
<dbReference type="UniPathway" id="UPA00100"/>
<dbReference type="GO" id="GO:0005737">
    <property type="term" value="C:cytoplasm"/>
    <property type="evidence" value="ECO:0007669"/>
    <property type="project" value="UniProtKB-SubCell"/>
</dbReference>
<dbReference type="GO" id="GO:0050897">
    <property type="term" value="F:cobalt ion binding"/>
    <property type="evidence" value="ECO:0000250"/>
    <property type="project" value="UniProtKB"/>
</dbReference>
<dbReference type="GO" id="GO:0016863">
    <property type="term" value="F:intramolecular oxidoreductase activity, transposing C=C bonds"/>
    <property type="evidence" value="ECO:0000250"/>
    <property type="project" value="UniProtKB"/>
</dbReference>
<dbReference type="GO" id="GO:0005506">
    <property type="term" value="F:iron ion binding"/>
    <property type="evidence" value="ECO:0000250"/>
    <property type="project" value="UniProtKB"/>
</dbReference>
<dbReference type="GO" id="GO:0017000">
    <property type="term" value="P:antibiotic biosynthetic process"/>
    <property type="evidence" value="ECO:0000250"/>
    <property type="project" value="UniProtKB"/>
</dbReference>
<dbReference type="CDD" id="cd10547">
    <property type="entry name" value="cupin_BacB_C"/>
    <property type="match status" value="1"/>
</dbReference>
<dbReference type="CDD" id="cd20307">
    <property type="entry name" value="cupin_BacB_N"/>
    <property type="match status" value="1"/>
</dbReference>
<dbReference type="Gene3D" id="2.60.120.10">
    <property type="entry name" value="Jelly Rolls"/>
    <property type="match status" value="2"/>
</dbReference>
<dbReference type="InterPro" id="IPR052535">
    <property type="entry name" value="Bacilysin_H2HPP_isomerase"/>
</dbReference>
<dbReference type="InterPro" id="IPR013096">
    <property type="entry name" value="Cupin_2"/>
</dbReference>
<dbReference type="InterPro" id="IPR014710">
    <property type="entry name" value="RmlC-like_jellyroll"/>
</dbReference>
<dbReference type="InterPro" id="IPR011051">
    <property type="entry name" value="RmlC_Cupin_sf"/>
</dbReference>
<dbReference type="PANTHER" id="PTHR40112">
    <property type="entry name" value="H2HPP ISOMERASE"/>
    <property type="match status" value="1"/>
</dbReference>
<dbReference type="PANTHER" id="PTHR40112:SF1">
    <property type="entry name" value="H2HPP ISOMERASE"/>
    <property type="match status" value="1"/>
</dbReference>
<dbReference type="Pfam" id="PF07883">
    <property type="entry name" value="Cupin_2"/>
    <property type="match status" value="2"/>
</dbReference>
<dbReference type="SUPFAM" id="SSF51182">
    <property type="entry name" value="RmlC-like cupins"/>
    <property type="match status" value="1"/>
</dbReference>
<name>BACB_BACAM</name>
<gene>
    <name evidence="1" type="primary">bacB</name>
</gene>
<evidence type="ECO:0000250" key="1">
    <source>
        <dbReference type="UniProtKB" id="P39639"/>
    </source>
</evidence>
<evidence type="ECO:0000255" key="2"/>
<evidence type="ECO:0000305" key="3"/>
<sequence>MKTKQDLQELYFPTPKLIEWENGVRQYSSVRGDTEVLLSYVPPHTNVEPHQHKEVQIGLVVSGELSMTVGDVTRKMTALESAYIAPPYVPHGARNETDQEVIAIDIKRLKAGETYTSPEDYFLNIFKTRDLLPGMEVTFFVEDWVEIMLANIPGNGGEMPFHKHRNEQIGICIGGGYDMTIEGCKVDMTFGTAYFCDPREDHGAINRFEKDSKSVNIFFPPRYNRAKAKKLEAKES</sequence>
<accession>Q8KWT0</accession>